<organism>
    <name type="scientific">Ureibacillus thermosphaericus</name>
    <dbReference type="NCBI Taxonomy" id="51173"/>
    <lineage>
        <taxon>Bacteria</taxon>
        <taxon>Bacillati</taxon>
        <taxon>Bacillota</taxon>
        <taxon>Bacilli</taxon>
        <taxon>Bacillales</taxon>
        <taxon>Caryophanaceae</taxon>
        <taxon>Ureibacillus</taxon>
    </lineage>
</organism>
<protein>
    <recommendedName>
        <fullName>Meso-diaminopimelate D-dehydrogenase</fullName>
        <shortName>DAPDH</shortName>
        <shortName>Meso-DAP dehydrogenase</shortName>
        <ecNumber>1.4.1.16</ecNumber>
    </recommendedName>
</protein>
<comment type="function">
    <text evidence="2">Catalyzes the reversible NADPH-dependent reductive amination of L-2-amino-6-oxopimelate, the acyclic form of L-tetrahydrodipicolinate, to generate the meso compound, D,L-2,6-diaminopimelate. Probably plays a role in lysine biosynthesis. Is highly specific for meso-2,6-diaminopimelate as the electron donor, since the following amino acids are inert for the oxidative deamination reaction: DL-2-aminopimelate, D-glutamate, L-glutamate, D-aspartate, L-aspartate, D-alanine, L-alanine, D-valine, L-valine, D-lysine, L-lysine, D-phenylalanine, L-phenylalanine, D-leucine, L-leucine, D-threonine, L-threonine, D-serine, L-serine, D-tryptophan, L-tryptophan, D-cysteine, L-cysteine, D-histidine, L-histidine, D-methionine, D-arginine, D-proline, D-asparagine, D-glutamine, D-isoleucine and D-ornithine. Moreover, exclusively uses NADP as the electron acceptor for the oxidative deamination of meso-DAP; NAD is inert.</text>
</comment>
<comment type="catalytic activity">
    <reaction evidence="2">
        <text>meso-2,6-diaminopimelate + NADP(+) + H2O = (S)-2-amino-6-oxoheptanedioate + NH4(+) + NADPH + H(+)</text>
        <dbReference type="Rhea" id="RHEA:13561"/>
        <dbReference type="ChEBI" id="CHEBI:15377"/>
        <dbReference type="ChEBI" id="CHEBI:15378"/>
        <dbReference type="ChEBI" id="CHEBI:28938"/>
        <dbReference type="ChEBI" id="CHEBI:57783"/>
        <dbReference type="ChEBI" id="CHEBI:57791"/>
        <dbReference type="ChEBI" id="CHEBI:58349"/>
        <dbReference type="ChEBI" id="CHEBI:58556"/>
        <dbReference type="EC" id="1.4.1.16"/>
    </reaction>
</comment>
<comment type="activity regulation">
    <text evidence="2">The enzyme is completely inhibited by p-chloromercuribenzoate and HgCl(2) in vitro. Thioglycollate, L-cysteine and Cu(2+) also strongly inhibit the enzyme.</text>
</comment>
<comment type="biophysicochemical properties">
    <kinetics>
        <KM evidence="2">1.6 mM for meso-2,6-diaminoheptanedioate (at 50 degrees Celsius and pH 10.5)</KM>
        <KM evidence="2">0.13 mM for NADP(+) (at 50 degrees Celsius and pH 10.5)</KM>
    </kinetics>
    <phDependence>
        <text evidence="2">Optimum pH is about 10.5. No activity is lost after 30 minutes incubation at pHs between 5.0 and 11.0.</text>
    </phDependence>
    <temperatureDependence>
        <text evidence="2">Optimum temperature is 65 degrees Celsius. Thermostable. No activity is lost after 30 minutes incubation at temperatures below 60 degrees Celsius, while half of the activity is lost after 30 minutes incubation at 65 degrees Celsius.</text>
    </temperatureDependence>
</comment>
<comment type="pathway">
    <text>Amino-acid biosynthesis; L-lysine biosynthesis via DAP pathway; DL-2,6-diaminopimelate from (S)-tetrahydrodipicolinate: step 1/1.</text>
</comment>
<comment type="subunit">
    <text evidence="2">Homodimer.</text>
</comment>
<comment type="similarity">
    <text evidence="3">Belongs to the diaminopimelate dehydrogenase family.</text>
</comment>
<evidence type="ECO:0000250" key="1"/>
<evidence type="ECO:0000269" key="2">
    <source>
    </source>
</evidence>
<evidence type="ECO:0000305" key="3"/>
<evidence type="ECO:0007829" key="4">
    <source>
        <dbReference type="PDB" id="5GZ3"/>
    </source>
</evidence>
<evidence type="ECO:0007829" key="5">
    <source>
        <dbReference type="PDB" id="5GZ6"/>
    </source>
</evidence>
<feature type="initiator methionine" description="Removed" evidence="2">
    <location>
        <position position="1"/>
    </location>
</feature>
<feature type="chain" id="PRO_0000417121" description="Meso-diaminopimelate D-dehydrogenase">
    <location>
        <begin position="2"/>
        <end position="326"/>
    </location>
</feature>
<feature type="binding site" evidence="1">
    <location>
        <begin position="11"/>
        <end position="14"/>
    </location>
    <ligand>
        <name>NADP(+)</name>
        <dbReference type="ChEBI" id="CHEBI:58349"/>
    </ligand>
</feature>
<feature type="binding site" evidence="1">
    <location>
        <begin position="35"/>
        <end position="37"/>
    </location>
    <ligand>
        <name>NADP(+)</name>
        <dbReference type="ChEBI" id="CHEBI:58349"/>
    </ligand>
</feature>
<feature type="binding site" evidence="1">
    <location>
        <begin position="69"/>
        <end position="72"/>
    </location>
    <ligand>
        <name>NADP(+)</name>
        <dbReference type="ChEBI" id="CHEBI:58349"/>
    </ligand>
</feature>
<feature type="binding site" evidence="1">
    <location>
        <begin position="92"/>
        <end position="94"/>
    </location>
    <ligand>
        <name>NADP(+)</name>
        <dbReference type="ChEBI" id="CHEBI:58349"/>
    </ligand>
</feature>
<feature type="binding site" evidence="1">
    <location>
        <position position="94"/>
    </location>
    <ligand>
        <name>substrate</name>
    </ligand>
</feature>
<feature type="binding site" evidence="1">
    <location>
        <begin position="121"/>
        <end position="125"/>
    </location>
    <ligand>
        <name>NADP(+)</name>
        <dbReference type="ChEBI" id="CHEBI:58349"/>
    </ligand>
</feature>
<feature type="binding site" evidence="1">
    <location>
        <position position="124"/>
    </location>
    <ligand>
        <name>substrate</name>
    </ligand>
</feature>
<feature type="binding site" evidence="1">
    <location>
        <position position="148"/>
    </location>
    <ligand>
        <name>substrate</name>
    </ligand>
</feature>
<feature type="binding site" evidence="1">
    <location>
        <begin position="154"/>
        <end position="155"/>
    </location>
    <ligand>
        <name>substrate</name>
    </ligand>
</feature>
<feature type="binding site" evidence="1">
    <location>
        <position position="173"/>
    </location>
    <ligand>
        <name>substrate</name>
    </ligand>
</feature>
<feature type="binding site" evidence="1">
    <location>
        <position position="199"/>
    </location>
    <ligand>
        <name>substrate</name>
    </ligand>
</feature>
<feature type="binding site" evidence="1">
    <location>
        <position position="249"/>
    </location>
    <ligand>
        <name>substrate</name>
    </ligand>
</feature>
<feature type="binding site" evidence="1">
    <location>
        <position position="276"/>
    </location>
    <ligand>
        <name>substrate</name>
    </ligand>
</feature>
<feature type="strand" evidence="4">
    <location>
        <begin position="4"/>
        <end position="9"/>
    </location>
</feature>
<feature type="helix" evidence="4">
    <location>
        <begin position="13"/>
        <end position="22"/>
    </location>
</feature>
<feature type="strand" evidence="4">
    <location>
        <begin position="28"/>
        <end position="37"/>
    </location>
</feature>
<feature type="helix" evidence="4">
    <location>
        <begin position="39"/>
        <end position="41"/>
    </location>
</feature>
<feature type="strand" evidence="5">
    <location>
        <begin position="45"/>
        <end position="47"/>
    </location>
</feature>
<feature type="strand" evidence="4">
    <location>
        <begin position="49"/>
        <end position="52"/>
    </location>
</feature>
<feature type="helix" evidence="4">
    <location>
        <begin position="53"/>
        <end position="59"/>
    </location>
</feature>
<feature type="turn" evidence="4">
    <location>
        <begin position="60"/>
        <end position="62"/>
    </location>
</feature>
<feature type="strand" evidence="4">
    <location>
        <begin position="64"/>
        <end position="68"/>
    </location>
</feature>
<feature type="turn" evidence="4">
    <location>
        <begin position="72"/>
        <end position="74"/>
    </location>
</feature>
<feature type="helix" evidence="4">
    <location>
        <begin position="75"/>
        <end position="84"/>
    </location>
</feature>
<feature type="strand" evidence="4">
    <location>
        <begin position="87"/>
        <end position="91"/>
    </location>
</feature>
<feature type="helix" evidence="4">
    <location>
        <begin position="96"/>
        <end position="98"/>
    </location>
</feature>
<feature type="helix" evidence="4">
    <location>
        <begin position="99"/>
        <end position="113"/>
    </location>
</feature>
<feature type="strand" evidence="4">
    <location>
        <begin position="116"/>
        <end position="118"/>
    </location>
</feature>
<feature type="turn" evidence="4">
    <location>
        <begin position="123"/>
        <end position="126"/>
    </location>
</feature>
<feature type="helix" evidence="4">
    <location>
        <begin position="127"/>
        <end position="138"/>
    </location>
</feature>
<feature type="strand" evidence="4">
    <location>
        <begin position="140"/>
        <end position="148"/>
    </location>
</feature>
<feature type="strand" evidence="4">
    <location>
        <begin position="150"/>
        <end position="152"/>
    </location>
</feature>
<feature type="helix" evidence="4">
    <location>
        <begin position="154"/>
        <end position="161"/>
    </location>
</feature>
<feature type="strand" evidence="4">
    <location>
        <begin position="166"/>
        <end position="175"/>
    </location>
</feature>
<feature type="helix" evidence="4">
    <location>
        <begin position="177"/>
        <end position="184"/>
    </location>
</feature>
<feature type="helix" evidence="4">
    <location>
        <begin position="193"/>
        <end position="196"/>
    </location>
</feature>
<feature type="strand" evidence="4">
    <location>
        <begin position="197"/>
        <end position="205"/>
    </location>
</feature>
<feature type="helix" evidence="4">
    <location>
        <begin position="211"/>
        <end position="219"/>
    </location>
</feature>
<feature type="turn" evidence="4">
    <location>
        <begin position="222"/>
        <end position="227"/>
    </location>
</feature>
<feature type="strand" evidence="4">
    <location>
        <begin position="230"/>
        <end position="234"/>
    </location>
</feature>
<feature type="helix" evidence="4">
    <location>
        <begin position="237"/>
        <end position="243"/>
    </location>
</feature>
<feature type="strand" evidence="5">
    <location>
        <begin position="244"/>
        <end position="246"/>
    </location>
</feature>
<feature type="strand" evidence="4">
    <location>
        <begin position="249"/>
        <end position="258"/>
    </location>
</feature>
<feature type="strand" evidence="4">
    <location>
        <begin position="264"/>
        <end position="275"/>
    </location>
</feature>
<feature type="helix" evidence="4">
    <location>
        <begin position="276"/>
        <end position="296"/>
    </location>
</feature>
<feature type="strand" evidence="4">
    <location>
        <begin position="301"/>
        <end position="303"/>
    </location>
</feature>
<feature type="helix" evidence="4">
    <location>
        <begin position="305"/>
        <end position="307"/>
    </location>
</feature>
<feature type="helix" evidence="4">
    <location>
        <begin position="310"/>
        <end position="313"/>
    </location>
</feature>
<feature type="strand" evidence="4">
    <location>
        <begin position="314"/>
        <end position="316"/>
    </location>
</feature>
<feature type="helix" evidence="4">
    <location>
        <begin position="318"/>
        <end position="324"/>
    </location>
</feature>
<gene>
    <name type="primary">ddh</name>
</gene>
<sequence>MSKIRIGIVGYGNLGRGVEAAIQQNPDMELVAVFTRRDPKTVAVKSNVKVLHVDDAQSYKDEIDVMILCGGSATDLPEQGPYFAQYFNTIDSFDTHARIPDYFDAVNAAAEQSGKVAIISVGWDPGLFSLNRLLGEVVLPVGNTYTFWGKGVSQGHSDAIRRIQGVKNAVQYTIPIDEAVNRVRSGENPELSTREKHARECFVVLEEGADPAKVEHEIKTMPNYFDEYDTTVHFISEEELKQNHSGMPHGGFVIRSGKSDEGHKQIIEFSLNLESNPMFTSSALVAYARAAYRLSQNGDKGAKTVFDIPFGLLSPKSPEDLRKELL</sequence>
<name>DAPDH_URETH</name>
<dbReference type="EC" id="1.4.1.16"/>
<dbReference type="EMBL" id="AB636161">
    <property type="protein sequence ID" value="BAK86217.1"/>
    <property type="molecule type" value="Genomic_DNA"/>
</dbReference>
<dbReference type="RefSeq" id="WP_016838077.1">
    <property type="nucleotide sequence ID" value="NZ_JACHGZ010000008.1"/>
</dbReference>
<dbReference type="PDB" id="3WYB">
    <property type="method" value="X-ray"/>
    <property type="resolution" value="2.40 A"/>
    <property type="chains" value="A/B=1-326"/>
</dbReference>
<dbReference type="PDB" id="3WYC">
    <property type="method" value="X-ray"/>
    <property type="resolution" value="2.07 A"/>
    <property type="chains" value="A/B=1-326"/>
</dbReference>
<dbReference type="PDB" id="5GZ1">
    <property type="method" value="X-ray"/>
    <property type="resolution" value="1.78 A"/>
    <property type="chains" value="A/B=1-326"/>
</dbReference>
<dbReference type="PDB" id="5GZ3">
    <property type="method" value="X-ray"/>
    <property type="resolution" value="1.59 A"/>
    <property type="chains" value="A/B=1-326"/>
</dbReference>
<dbReference type="PDB" id="5GZ6">
    <property type="method" value="X-ray"/>
    <property type="resolution" value="1.74 A"/>
    <property type="chains" value="A/B=1-326"/>
</dbReference>
<dbReference type="PDBsum" id="3WYB"/>
<dbReference type="PDBsum" id="3WYC"/>
<dbReference type="PDBsum" id="5GZ1"/>
<dbReference type="PDBsum" id="5GZ3"/>
<dbReference type="PDBsum" id="5GZ6"/>
<dbReference type="SMR" id="G1UII1"/>
<dbReference type="BRENDA" id="1.4.1.16">
    <property type="organism ID" value="13484"/>
</dbReference>
<dbReference type="UniPathway" id="UPA00034">
    <property type="reaction ID" value="UER00026"/>
</dbReference>
<dbReference type="EvolutionaryTrace" id="G1UII1"/>
<dbReference type="GO" id="GO:0008839">
    <property type="term" value="F:4-hydroxy-tetrahydrodipicolinate reductase"/>
    <property type="evidence" value="ECO:0007669"/>
    <property type="project" value="InterPro"/>
</dbReference>
<dbReference type="GO" id="GO:0047850">
    <property type="term" value="F:diaminopimelate dehydrogenase activity"/>
    <property type="evidence" value="ECO:0007669"/>
    <property type="project" value="UniProtKB-EC"/>
</dbReference>
<dbReference type="GO" id="GO:0019877">
    <property type="term" value="P:diaminopimelate biosynthetic process"/>
    <property type="evidence" value="ECO:0007669"/>
    <property type="project" value="UniProtKB-KW"/>
</dbReference>
<dbReference type="GO" id="GO:0009089">
    <property type="term" value="P:lysine biosynthetic process via diaminopimelate"/>
    <property type="evidence" value="ECO:0007669"/>
    <property type="project" value="UniProtKB-UniPathway"/>
</dbReference>
<dbReference type="CDD" id="cd02270">
    <property type="entry name" value="meso-DAPDH_N"/>
    <property type="match status" value="1"/>
</dbReference>
<dbReference type="Gene3D" id="3.30.360.10">
    <property type="entry name" value="Dihydrodipicolinate Reductase, domain 2"/>
    <property type="match status" value="1"/>
</dbReference>
<dbReference type="Gene3D" id="3.40.50.720">
    <property type="entry name" value="NAD(P)-binding Rossmann-like Domain"/>
    <property type="match status" value="1"/>
</dbReference>
<dbReference type="InterPro" id="IPR000846">
    <property type="entry name" value="DapB_N"/>
</dbReference>
<dbReference type="InterPro" id="IPR010190">
    <property type="entry name" value="Diaminopimelate_DH_Ddh"/>
</dbReference>
<dbReference type="InterPro" id="IPR032094">
    <property type="entry name" value="Meso-DAP_DH_C"/>
</dbReference>
<dbReference type="InterPro" id="IPR036291">
    <property type="entry name" value="NAD(P)-bd_dom_sf"/>
</dbReference>
<dbReference type="NCBIfam" id="TIGR01921">
    <property type="entry name" value="DAP-DH"/>
    <property type="match status" value="1"/>
</dbReference>
<dbReference type="Pfam" id="PF01113">
    <property type="entry name" value="DapB_N"/>
    <property type="match status" value="1"/>
</dbReference>
<dbReference type="Pfam" id="PF16654">
    <property type="entry name" value="DAPDH_C"/>
    <property type="match status" value="1"/>
</dbReference>
<dbReference type="PIRSF" id="PIRSF025648">
    <property type="entry name" value="DDH"/>
    <property type="match status" value="1"/>
</dbReference>
<dbReference type="SUPFAM" id="SSF55347">
    <property type="entry name" value="Glyceraldehyde-3-phosphate dehydrogenase-like, C-terminal domain"/>
    <property type="match status" value="1"/>
</dbReference>
<dbReference type="SUPFAM" id="SSF51735">
    <property type="entry name" value="NAD(P)-binding Rossmann-fold domains"/>
    <property type="match status" value="1"/>
</dbReference>
<keyword id="KW-0002">3D-structure</keyword>
<keyword id="KW-0028">Amino-acid biosynthesis</keyword>
<keyword id="KW-0220">Diaminopimelate biosynthesis</keyword>
<keyword id="KW-0903">Direct protein sequencing</keyword>
<keyword id="KW-0457">Lysine biosynthesis</keyword>
<keyword id="KW-0521">NADP</keyword>
<keyword id="KW-0560">Oxidoreductase</keyword>
<proteinExistence type="evidence at protein level"/>
<reference key="1">
    <citation type="journal article" date="2011" name="AMB Express">
        <title>Highly stable meso-diaminopimelate dehydrogenase from an Ureibacillus thermosphaericus strain A1 isolated from a Japanese compost: purification, characterization and sequencing.</title>
        <authorList>
            <person name="Akita H."/>
            <person name="Fujino Y."/>
            <person name="Doi K."/>
            <person name="Ohshima T."/>
        </authorList>
    </citation>
    <scope>NUCLEOTIDE SEQUENCE [GENOMIC DNA]</scope>
    <scope>PROTEIN SEQUENCE OF 2-11</scope>
    <scope>FUNCTION</scope>
    <scope>CATALYTIC ACTIVITY</scope>
    <scope>SUBSTRATE SPECIFICITY</scope>
    <scope>BIOPHYSICOCHEMICAL PROPERTIES</scope>
    <scope>ACTIVITY REGULATION</scope>
    <scope>SUBUNIT</scope>
    <source>
        <strain>A1 / NBRC 108682</strain>
    </source>
</reference>
<accession>G1UII1</accession>